<gene>
    <name evidence="1" type="primary">tig</name>
    <name type="ordered locus">BAMEG_4741</name>
</gene>
<evidence type="ECO:0000255" key="1">
    <source>
        <dbReference type="HAMAP-Rule" id="MF_00303"/>
    </source>
</evidence>
<sequence length="425" mass="47214">MAAKWEKLEGNVGVLTIEVDAKEVNNSIDAAFKKVVKTINVPGFRKGKMPRPLFEQRFGIESLYQDALDIILPKAYGEAIDEAGIFPVAHPEIDIEKFEKNANLIFTAKVTVKPEVKLGEYKGLAVEKVETTVTDEDVENELKSLQERQAELVVKEEGTVENGDTAVIDFEGFVDGEAFEGGKGENYSLAIGSGTFIPGFEEQVIGLKSGESKDVEVSFPEEYHAAELAGKPATFKVTVHEIKTKELPELNDEFAKEADEAVATLDELKAKLRTNLEEGKKHEAEHKVRDEVVELAAANAEIDIPEAMIDTELDRMVREFEQRLSQQGMNLELYYQFTGTDADKLKEQMKEDAQKRVRINLVLEAIIEAENIEVTEEEVTAEVEKMAEMYGMPVDAIKQALGSVDALAEDLKVRKAVDFLVENAA</sequence>
<proteinExistence type="inferred from homology"/>
<keyword id="KW-0131">Cell cycle</keyword>
<keyword id="KW-0132">Cell division</keyword>
<keyword id="KW-0143">Chaperone</keyword>
<keyword id="KW-0963">Cytoplasm</keyword>
<keyword id="KW-0413">Isomerase</keyword>
<keyword id="KW-0697">Rotamase</keyword>
<comment type="function">
    <text evidence="1">Involved in protein export. Acts as a chaperone by maintaining the newly synthesized protein in an open conformation. Functions as a peptidyl-prolyl cis-trans isomerase.</text>
</comment>
<comment type="catalytic activity">
    <reaction evidence="1">
        <text>[protein]-peptidylproline (omega=180) = [protein]-peptidylproline (omega=0)</text>
        <dbReference type="Rhea" id="RHEA:16237"/>
        <dbReference type="Rhea" id="RHEA-COMP:10747"/>
        <dbReference type="Rhea" id="RHEA-COMP:10748"/>
        <dbReference type="ChEBI" id="CHEBI:83833"/>
        <dbReference type="ChEBI" id="CHEBI:83834"/>
        <dbReference type="EC" id="5.2.1.8"/>
    </reaction>
</comment>
<comment type="subcellular location">
    <subcellularLocation>
        <location>Cytoplasm</location>
    </subcellularLocation>
    <text evidence="1">About half TF is bound to the ribosome near the polypeptide exit tunnel while the other half is free in the cytoplasm.</text>
</comment>
<comment type="domain">
    <text evidence="1">Consists of 3 domains; the N-terminus binds the ribosome, the middle domain has PPIase activity, while the C-terminus has intrinsic chaperone activity on its own.</text>
</comment>
<comment type="similarity">
    <text evidence="1">Belongs to the FKBP-type PPIase family. Tig subfamily.</text>
</comment>
<dbReference type="EC" id="5.2.1.8" evidence="1"/>
<dbReference type="EMBL" id="CP001215">
    <property type="protein sequence ID" value="ACP13059.1"/>
    <property type="molecule type" value="Genomic_DNA"/>
</dbReference>
<dbReference type="RefSeq" id="WP_000729253.1">
    <property type="nucleotide sequence ID" value="NC_012581.1"/>
</dbReference>
<dbReference type="SMR" id="C3L705"/>
<dbReference type="GeneID" id="45024345"/>
<dbReference type="KEGG" id="bah:BAMEG_4741"/>
<dbReference type="HOGENOM" id="CLU_033058_3_2_9"/>
<dbReference type="GO" id="GO:0005737">
    <property type="term" value="C:cytoplasm"/>
    <property type="evidence" value="ECO:0007669"/>
    <property type="project" value="UniProtKB-SubCell"/>
</dbReference>
<dbReference type="GO" id="GO:0003755">
    <property type="term" value="F:peptidyl-prolyl cis-trans isomerase activity"/>
    <property type="evidence" value="ECO:0007669"/>
    <property type="project" value="UniProtKB-UniRule"/>
</dbReference>
<dbReference type="GO" id="GO:0044183">
    <property type="term" value="F:protein folding chaperone"/>
    <property type="evidence" value="ECO:0007669"/>
    <property type="project" value="TreeGrafter"/>
</dbReference>
<dbReference type="GO" id="GO:0043022">
    <property type="term" value="F:ribosome binding"/>
    <property type="evidence" value="ECO:0007669"/>
    <property type="project" value="TreeGrafter"/>
</dbReference>
<dbReference type="GO" id="GO:0051083">
    <property type="term" value="P:'de novo' cotranslational protein folding"/>
    <property type="evidence" value="ECO:0007669"/>
    <property type="project" value="TreeGrafter"/>
</dbReference>
<dbReference type="GO" id="GO:0051301">
    <property type="term" value="P:cell division"/>
    <property type="evidence" value="ECO:0007669"/>
    <property type="project" value="UniProtKB-KW"/>
</dbReference>
<dbReference type="GO" id="GO:0061077">
    <property type="term" value="P:chaperone-mediated protein folding"/>
    <property type="evidence" value="ECO:0007669"/>
    <property type="project" value="TreeGrafter"/>
</dbReference>
<dbReference type="GO" id="GO:0015031">
    <property type="term" value="P:protein transport"/>
    <property type="evidence" value="ECO:0007669"/>
    <property type="project" value="UniProtKB-UniRule"/>
</dbReference>
<dbReference type="GO" id="GO:0043335">
    <property type="term" value="P:protein unfolding"/>
    <property type="evidence" value="ECO:0007669"/>
    <property type="project" value="TreeGrafter"/>
</dbReference>
<dbReference type="FunFam" id="3.10.50.40:FF:000001">
    <property type="entry name" value="Trigger factor"/>
    <property type="match status" value="1"/>
</dbReference>
<dbReference type="FunFam" id="3.30.70.1050:FF:000002">
    <property type="entry name" value="Trigger factor"/>
    <property type="match status" value="1"/>
</dbReference>
<dbReference type="Gene3D" id="3.10.50.40">
    <property type="match status" value="1"/>
</dbReference>
<dbReference type="Gene3D" id="3.30.70.1050">
    <property type="entry name" value="Trigger factor ribosome-binding domain"/>
    <property type="match status" value="1"/>
</dbReference>
<dbReference type="Gene3D" id="1.10.3120.10">
    <property type="entry name" value="Trigger factor, C-terminal domain"/>
    <property type="match status" value="1"/>
</dbReference>
<dbReference type="HAMAP" id="MF_00303">
    <property type="entry name" value="Trigger_factor_Tig"/>
    <property type="match status" value="1"/>
</dbReference>
<dbReference type="InterPro" id="IPR046357">
    <property type="entry name" value="PPIase_dom_sf"/>
</dbReference>
<dbReference type="InterPro" id="IPR001179">
    <property type="entry name" value="PPIase_FKBP_dom"/>
</dbReference>
<dbReference type="InterPro" id="IPR005215">
    <property type="entry name" value="Trig_fac"/>
</dbReference>
<dbReference type="InterPro" id="IPR008880">
    <property type="entry name" value="Trigger_fac_C"/>
</dbReference>
<dbReference type="InterPro" id="IPR037041">
    <property type="entry name" value="Trigger_fac_C_sf"/>
</dbReference>
<dbReference type="InterPro" id="IPR008881">
    <property type="entry name" value="Trigger_fac_ribosome-bd_bac"/>
</dbReference>
<dbReference type="InterPro" id="IPR036611">
    <property type="entry name" value="Trigger_fac_ribosome-bd_sf"/>
</dbReference>
<dbReference type="InterPro" id="IPR027304">
    <property type="entry name" value="Trigger_fact/SurA_dom_sf"/>
</dbReference>
<dbReference type="NCBIfam" id="TIGR00115">
    <property type="entry name" value="tig"/>
    <property type="match status" value="1"/>
</dbReference>
<dbReference type="PANTHER" id="PTHR30560">
    <property type="entry name" value="TRIGGER FACTOR CHAPERONE AND PEPTIDYL-PROLYL CIS/TRANS ISOMERASE"/>
    <property type="match status" value="1"/>
</dbReference>
<dbReference type="PANTHER" id="PTHR30560:SF3">
    <property type="entry name" value="TRIGGER FACTOR-LIKE PROTEIN TIG, CHLOROPLASTIC"/>
    <property type="match status" value="1"/>
</dbReference>
<dbReference type="Pfam" id="PF00254">
    <property type="entry name" value="FKBP_C"/>
    <property type="match status" value="1"/>
</dbReference>
<dbReference type="Pfam" id="PF05698">
    <property type="entry name" value="Trigger_C"/>
    <property type="match status" value="1"/>
</dbReference>
<dbReference type="Pfam" id="PF05697">
    <property type="entry name" value="Trigger_N"/>
    <property type="match status" value="1"/>
</dbReference>
<dbReference type="PIRSF" id="PIRSF003095">
    <property type="entry name" value="Trigger_factor"/>
    <property type="match status" value="1"/>
</dbReference>
<dbReference type="SUPFAM" id="SSF54534">
    <property type="entry name" value="FKBP-like"/>
    <property type="match status" value="1"/>
</dbReference>
<dbReference type="SUPFAM" id="SSF109998">
    <property type="entry name" value="Triger factor/SurA peptide-binding domain-like"/>
    <property type="match status" value="1"/>
</dbReference>
<dbReference type="SUPFAM" id="SSF102735">
    <property type="entry name" value="Trigger factor ribosome-binding domain"/>
    <property type="match status" value="1"/>
</dbReference>
<dbReference type="PROSITE" id="PS50059">
    <property type="entry name" value="FKBP_PPIASE"/>
    <property type="match status" value="1"/>
</dbReference>
<organism>
    <name type="scientific">Bacillus anthracis (strain CDC 684 / NRRL 3495)</name>
    <dbReference type="NCBI Taxonomy" id="568206"/>
    <lineage>
        <taxon>Bacteria</taxon>
        <taxon>Bacillati</taxon>
        <taxon>Bacillota</taxon>
        <taxon>Bacilli</taxon>
        <taxon>Bacillales</taxon>
        <taxon>Bacillaceae</taxon>
        <taxon>Bacillus</taxon>
        <taxon>Bacillus cereus group</taxon>
    </lineage>
</organism>
<protein>
    <recommendedName>
        <fullName evidence="1">Trigger factor</fullName>
        <shortName evidence="1">TF</shortName>
        <ecNumber evidence="1">5.2.1.8</ecNumber>
    </recommendedName>
    <alternativeName>
        <fullName evidence="1">PPIase</fullName>
    </alternativeName>
</protein>
<feature type="chain" id="PRO_1000198140" description="Trigger factor">
    <location>
        <begin position="1"/>
        <end position="425"/>
    </location>
</feature>
<feature type="domain" description="PPIase FKBP-type" evidence="1">
    <location>
        <begin position="163"/>
        <end position="248"/>
    </location>
</feature>
<name>TIG_BACAC</name>
<accession>C3L705</accession>
<reference key="1">
    <citation type="submission" date="2008-10" db="EMBL/GenBank/DDBJ databases">
        <title>Genome sequence of Bacillus anthracis str. CDC 684.</title>
        <authorList>
            <person name="Dodson R.J."/>
            <person name="Munk A.C."/>
            <person name="Brettin T."/>
            <person name="Bruce D."/>
            <person name="Detter C."/>
            <person name="Tapia R."/>
            <person name="Han C."/>
            <person name="Sutton G."/>
            <person name="Sims D."/>
        </authorList>
    </citation>
    <scope>NUCLEOTIDE SEQUENCE [LARGE SCALE GENOMIC DNA]</scope>
    <source>
        <strain>CDC 684 / NRRL 3495</strain>
    </source>
</reference>